<comment type="function">
    <text evidence="1">Required for the expression of anaerobic nitric oxide (NO) reductase, acts as a transcriptional activator for at least the norVW operon. Activation also requires sigma-54.</text>
</comment>
<comment type="pathway">
    <text evidence="1">Nitrogen metabolism; nitric oxide reduction.</text>
</comment>
<organism>
    <name type="scientific">Escherichia coli O139:H28 (strain E24377A / ETEC)</name>
    <dbReference type="NCBI Taxonomy" id="331111"/>
    <lineage>
        <taxon>Bacteria</taxon>
        <taxon>Pseudomonadati</taxon>
        <taxon>Pseudomonadota</taxon>
        <taxon>Gammaproteobacteria</taxon>
        <taxon>Enterobacterales</taxon>
        <taxon>Enterobacteriaceae</taxon>
        <taxon>Escherichia</taxon>
    </lineage>
</organism>
<reference key="1">
    <citation type="journal article" date="2008" name="J. Bacteriol.">
        <title>The pangenome structure of Escherichia coli: comparative genomic analysis of E. coli commensal and pathogenic isolates.</title>
        <authorList>
            <person name="Rasko D.A."/>
            <person name="Rosovitz M.J."/>
            <person name="Myers G.S.A."/>
            <person name="Mongodin E.F."/>
            <person name="Fricke W.F."/>
            <person name="Gajer P."/>
            <person name="Crabtree J."/>
            <person name="Sebaihia M."/>
            <person name="Thomson N.R."/>
            <person name="Chaudhuri R."/>
            <person name="Henderson I.R."/>
            <person name="Sperandio V."/>
            <person name="Ravel J."/>
        </authorList>
    </citation>
    <scope>NUCLEOTIDE SEQUENCE [LARGE SCALE GENOMIC DNA]</scope>
    <source>
        <strain>E24377A / ETEC</strain>
    </source>
</reference>
<keyword id="KW-0067">ATP-binding</keyword>
<keyword id="KW-0238">DNA-binding</keyword>
<keyword id="KW-0547">Nucleotide-binding</keyword>
<keyword id="KW-0597">Phosphoprotein</keyword>
<keyword id="KW-1185">Reference proteome</keyword>
<keyword id="KW-0804">Transcription</keyword>
<keyword id="KW-0805">Transcription regulation</keyword>
<feature type="chain" id="PRO_1000067511" description="Anaerobic nitric oxide reductase transcription regulator NorR">
    <location>
        <begin position="1"/>
        <end position="504"/>
    </location>
</feature>
<feature type="domain" description="Sigma-54 factor interaction" evidence="1">
    <location>
        <begin position="187"/>
        <end position="416"/>
    </location>
</feature>
<feature type="DNA-binding region" description="H-T-H motif" evidence="1">
    <location>
        <begin position="479"/>
        <end position="498"/>
    </location>
</feature>
<feature type="binding site" evidence="1">
    <location>
        <begin position="215"/>
        <end position="222"/>
    </location>
    <ligand>
        <name>ATP</name>
        <dbReference type="ChEBI" id="CHEBI:30616"/>
    </ligand>
</feature>
<feature type="binding site" evidence="1">
    <location>
        <begin position="278"/>
        <end position="287"/>
    </location>
    <ligand>
        <name>ATP</name>
        <dbReference type="ChEBI" id="CHEBI:30616"/>
    </ligand>
</feature>
<feature type="modified residue" description="4-aspartylphosphate" evidence="1">
    <location>
        <position position="57"/>
    </location>
</feature>
<gene>
    <name evidence="1" type="primary">norR</name>
    <name type="ordered locus">EcE24377A_2992</name>
</gene>
<protein>
    <recommendedName>
        <fullName evidence="1">Anaerobic nitric oxide reductase transcription regulator NorR</fullName>
    </recommendedName>
</protein>
<sequence length="504" mass="55207">MSFSVDVLANIAIELQRGIGHQDRFQRLITTLRQVLECDASALLRYDSRQFIPLAIDGLAKDVLGRRFALEGHPRLEAIARAGDVVRFPADSELPDPYDGLIPGQESLKVHACVGLPLFAGQNLIGALTLDGMQPDQFDVFSDEELRLIAALAAGALSNALLIEQLESQNMMPGDATPFEAVKQTQMIGLSPGMTQLKKEIEIVAASDLNVLISGETGTGKELVAKAIHEASPRAVNPLVYLNCAALPESVAESELFGHVKGAFTGAISNRSGKFEMADNGTLFLDEIGELSLALQAKLLRVLQYGDIQRVGDDRSLRVDVRVLAATNRDLREEVLAGRFRADLFHRLSVFPLSVPPLRERGDDVILLAGYFCEQCRLRLGLSRVVLSAGARNLLQHYSFPGNVRELEHAIHRAVVLSRATRSGDEVILEAQHFAFPEVTLPPPEAAAVPVVKQNLREATEAFQRETIRQALAQNHHNWAACARMLETDVANLHRLAKRLGLKD</sequence>
<accession>A7ZQD8</accession>
<name>NORR_ECO24</name>
<proteinExistence type="inferred from homology"/>
<evidence type="ECO:0000255" key="1">
    <source>
        <dbReference type="HAMAP-Rule" id="MF_01314"/>
    </source>
</evidence>
<dbReference type="EMBL" id="CP000800">
    <property type="protein sequence ID" value="ABV19611.1"/>
    <property type="molecule type" value="Genomic_DNA"/>
</dbReference>
<dbReference type="RefSeq" id="WP_000010779.1">
    <property type="nucleotide sequence ID" value="NC_009801.1"/>
</dbReference>
<dbReference type="SMR" id="A7ZQD8"/>
<dbReference type="KEGG" id="ecw:EcE24377A_2992"/>
<dbReference type="HOGENOM" id="CLU_000445_125_0_6"/>
<dbReference type="UniPathway" id="UPA00638"/>
<dbReference type="Proteomes" id="UP000001122">
    <property type="component" value="Chromosome"/>
</dbReference>
<dbReference type="GO" id="GO:0005524">
    <property type="term" value="F:ATP binding"/>
    <property type="evidence" value="ECO:0007669"/>
    <property type="project" value="UniProtKB-UniRule"/>
</dbReference>
<dbReference type="GO" id="GO:0016887">
    <property type="term" value="F:ATP hydrolysis activity"/>
    <property type="evidence" value="ECO:0007669"/>
    <property type="project" value="InterPro"/>
</dbReference>
<dbReference type="GO" id="GO:0003677">
    <property type="term" value="F:DNA binding"/>
    <property type="evidence" value="ECO:0007669"/>
    <property type="project" value="UniProtKB-KW"/>
</dbReference>
<dbReference type="GO" id="GO:0003700">
    <property type="term" value="F:DNA-binding transcription factor activity"/>
    <property type="evidence" value="ECO:0007669"/>
    <property type="project" value="UniProtKB-UniRule"/>
</dbReference>
<dbReference type="GO" id="GO:0000160">
    <property type="term" value="P:phosphorelay signal transduction system"/>
    <property type="evidence" value="ECO:0007669"/>
    <property type="project" value="UniProtKB-UniRule"/>
</dbReference>
<dbReference type="CDD" id="cd00009">
    <property type="entry name" value="AAA"/>
    <property type="match status" value="1"/>
</dbReference>
<dbReference type="FunFam" id="1.10.10.60:FF:000188">
    <property type="entry name" value="Anaerobic nitric oxide reductase transcription regulator NorR"/>
    <property type="match status" value="1"/>
</dbReference>
<dbReference type="FunFam" id="1.10.8.60:FF:000045">
    <property type="entry name" value="Anaerobic nitric oxide reductase transcription regulator NorR"/>
    <property type="match status" value="1"/>
</dbReference>
<dbReference type="FunFam" id="3.30.450.40:FF:000021">
    <property type="entry name" value="Anaerobic nitric oxide reductase transcription regulator NorR"/>
    <property type="match status" value="1"/>
</dbReference>
<dbReference type="FunFam" id="3.40.50.300:FF:000006">
    <property type="entry name" value="DNA-binding transcriptional regulator NtrC"/>
    <property type="match status" value="1"/>
</dbReference>
<dbReference type="Gene3D" id="1.10.8.60">
    <property type="match status" value="1"/>
</dbReference>
<dbReference type="Gene3D" id="3.30.450.40">
    <property type="match status" value="1"/>
</dbReference>
<dbReference type="Gene3D" id="1.10.10.60">
    <property type="entry name" value="Homeodomain-like"/>
    <property type="match status" value="1"/>
</dbReference>
<dbReference type="Gene3D" id="3.40.50.300">
    <property type="entry name" value="P-loop containing nucleotide triphosphate hydrolases"/>
    <property type="match status" value="1"/>
</dbReference>
<dbReference type="HAMAP" id="MF_01314">
    <property type="entry name" value="NorR"/>
    <property type="match status" value="1"/>
</dbReference>
<dbReference type="InterPro" id="IPR003593">
    <property type="entry name" value="AAA+_ATPase"/>
</dbReference>
<dbReference type="InterPro" id="IPR003018">
    <property type="entry name" value="GAF"/>
</dbReference>
<dbReference type="InterPro" id="IPR029016">
    <property type="entry name" value="GAF-like_dom_sf"/>
</dbReference>
<dbReference type="InterPro" id="IPR009057">
    <property type="entry name" value="Homeodomain-like_sf"/>
</dbReference>
<dbReference type="InterPro" id="IPR023944">
    <property type="entry name" value="NorR"/>
</dbReference>
<dbReference type="InterPro" id="IPR027417">
    <property type="entry name" value="P-loop_NTPase"/>
</dbReference>
<dbReference type="InterPro" id="IPR002078">
    <property type="entry name" value="Sigma_54_int"/>
</dbReference>
<dbReference type="InterPro" id="IPR025662">
    <property type="entry name" value="Sigma_54_int_dom_ATP-bd_1"/>
</dbReference>
<dbReference type="InterPro" id="IPR025943">
    <property type="entry name" value="Sigma_54_int_dom_ATP-bd_2"/>
</dbReference>
<dbReference type="InterPro" id="IPR025944">
    <property type="entry name" value="Sigma_54_int_dom_CS"/>
</dbReference>
<dbReference type="NCBIfam" id="NF003451">
    <property type="entry name" value="PRK05022.1"/>
    <property type="match status" value="1"/>
</dbReference>
<dbReference type="PANTHER" id="PTHR32071:SF35">
    <property type="entry name" value="ANAEROBIC NITRIC OXIDE REDUCTASE TRANSCRIPTION REGULATOR NORR"/>
    <property type="match status" value="1"/>
</dbReference>
<dbReference type="PANTHER" id="PTHR32071">
    <property type="entry name" value="TRANSCRIPTIONAL REGULATORY PROTEIN"/>
    <property type="match status" value="1"/>
</dbReference>
<dbReference type="Pfam" id="PF01590">
    <property type="entry name" value="GAF"/>
    <property type="match status" value="1"/>
</dbReference>
<dbReference type="Pfam" id="PF00158">
    <property type="entry name" value="Sigma54_activat"/>
    <property type="match status" value="1"/>
</dbReference>
<dbReference type="SMART" id="SM00382">
    <property type="entry name" value="AAA"/>
    <property type="match status" value="1"/>
</dbReference>
<dbReference type="SMART" id="SM00065">
    <property type="entry name" value="GAF"/>
    <property type="match status" value="1"/>
</dbReference>
<dbReference type="SUPFAM" id="SSF55781">
    <property type="entry name" value="GAF domain-like"/>
    <property type="match status" value="1"/>
</dbReference>
<dbReference type="SUPFAM" id="SSF46689">
    <property type="entry name" value="Homeodomain-like"/>
    <property type="match status" value="1"/>
</dbReference>
<dbReference type="SUPFAM" id="SSF52540">
    <property type="entry name" value="P-loop containing nucleoside triphosphate hydrolases"/>
    <property type="match status" value="1"/>
</dbReference>
<dbReference type="PROSITE" id="PS00675">
    <property type="entry name" value="SIGMA54_INTERACT_1"/>
    <property type="match status" value="1"/>
</dbReference>
<dbReference type="PROSITE" id="PS00676">
    <property type="entry name" value="SIGMA54_INTERACT_2"/>
    <property type="match status" value="1"/>
</dbReference>
<dbReference type="PROSITE" id="PS00688">
    <property type="entry name" value="SIGMA54_INTERACT_3"/>
    <property type="match status" value="1"/>
</dbReference>
<dbReference type="PROSITE" id="PS50045">
    <property type="entry name" value="SIGMA54_INTERACT_4"/>
    <property type="match status" value="1"/>
</dbReference>